<keyword id="KW-0028">Amino-acid biosynthesis</keyword>
<keyword id="KW-0963">Cytoplasm</keyword>
<keyword id="KW-0521">NADP</keyword>
<keyword id="KW-0560">Oxidoreductase</keyword>
<keyword id="KW-0641">Proline biosynthesis</keyword>
<keyword id="KW-1185">Reference proteome</keyword>
<feature type="chain" id="PRO_0000340870" description="Gamma-glutamyl phosphate reductase">
    <location>
        <begin position="1"/>
        <end position="420"/>
    </location>
</feature>
<sequence length="420" mass="45465">MTEDIRAYMQTLGRQAREAAREMARADTGHKNAALHAMADALEEHAGDLKRANADDLENGRANNLDPALLDRLELNDERIHGMAEGLRQIAALPDPVGAIRDLAFRPSGIQVGRMRVPLGVIGIIYESRPNVTADAAALCLKSGNAAILRGGSEARHSNAAIAACVRAGLKRAGLPGEAVQVVETTDRAAVGELIRMDEYVDVLVPRGGKGLIERITAEATVPVIKHLDGICHVYIDDSADPAKAISVAYNAKTQRLGTCNTMETLLVAEAIAERVLPELARRYRESEVELRGCEATRRLIPDAVPATKEDWSTEYLDAIVSIRIVPGLDEAIEHIARHSSGHTESILTEDWSRARRFLREVDSSSVMVNASTRFADGFEYGLGAEIGISTDKLHARGPVGLEGLTTEKFIVLGDGHIRE</sequence>
<dbReference type="EC" id="1.2.1.41" evidence="1"/>
<dbReference type="EMBL" id="CP000453">
    <property type="protein sequence ID" value="ABI55757.1"/>
    <property type="molecule type" value="Genomic_DNA"/>
</dbReference>
<dbReference type="RefSeq" id="WP_011628153.1">
    <property type="nucleotide sequence ID" value="NC_008340.1"/>
</dbReference>
<dbReference type="SMR" id="Q0ABN0"/>
<dbReference type="KEGG" id="aeh:Mlg_0403"/>
<dbReference type="eggNOG" id="COG0014">
    <property type="taxonomic scope" value="Bacteria"/>
</dbReference>
<dbReference type="HOGENOM" id="CLU_030231_0_0_6"/>
<dbReference type="OrthoDB" id="9809970at2"/>
<dbReference type="UniPathway" id="UPA00098">
    <property type="reaction ID" value="UER00360"/>
</dbReference>
<dbReference type="Proteomes" id="UP000001962">
    <property type="component" value="Chromosome"/>
</dbReference>
<dbReference type="GO" id="GO:0005737">
    <property type="term" value="C:cytoplasm"/>
    <property type="evidence" value="ECO:0007669"/>
    <property type="project" value="UniProtKB-SubCell"/>
</dbReference>
<dbReference type="GO" id="GO:0004350">
    <property type="term" value="F:glutamate-5-semialdehyde dehydrogenase activity"/>
    <property type="evidence" value="ECO:0007669"/>
    <property type="project" value="UniProtKB-UniRule"/>
</dbReference>
<dbReference type="GO" id="GO:0050661">
    <property type="term" value="F:NADP binding"/>
    <property type="evidence" value="ECO:0007669"/>
    <property type="project" value="InterPro"/>
</dbReference>
<dbReference type="GO" id="GO:0055129">
    <property type="term" value="P:L-proline biosynthetic process"/>
    <property type="evidence" value="ECO:0007669"/>
    <property type="project" value="UniProtKB-UniRule"/>
</dbReference>
<dbReference type="CDD" id="cd07079">
    <property type="entry name" value="ALDH_F18-19_ProA-GPR"/>
    <property type="match status" value="1"/>
</dbReference>
<dbReference type="FunFam" id="3.40.309.10:FF:000006">
    <property type="entry name" value="Gamma-glutamyl phosphate reductase"/>
    <property type="match status" value="1"/>
</dbReference>
<dbReference type="Gene3D" id="3.40.605.10">
    <property type="entry name" value="Aldehyde Dehydrogenase, Chain A, domain 1"/>
    <property type="match status" value="1"/>
</dbReference>
<dbReference type="Gene3D" id="3.40.309.10">
    <property type="entry name" value="Aldehyde Dehydrogenase, Chain A, domain 2"/>
    <property type="match status" value="1"/>
</dbReference>
<dbReference type="HAMAP" id="MF_00412">
    <property type="entry name" value="ProA"/>
    <property type="match status" value="1"/>
</dbReference>
<dbReference type="InterPro" id="IPR016161">
    <property type="entry name" value="Ald_DH/histidinol_DH"/>
</dbReference>
<dbReference type="InterPro" id="IPR016163">
    <property type="entry name" value="Ald_DH_C"/>
</dbReference>
<dbReference type="InterPro" id="IPR016162">
    <property type="entry name" value="Ald_DH_N"/>
</dbReference>
<dbReference type="InterPro" id="IPR015590">
    <property type="entry name" value="Aldehyde_DH_dom"/>
</dbReference>
<dbReference type="InterPro" id="IPR020593">
    <property type="entry name" value="G-glutamylP_reductase_CS"/>
</dbReference>
<dbReference type="InterPro" id="IPR012134">
    <property type="entry name" value="Glu-5-SA_DH"/>
</dbReference>
<dbReference type="InterPro" id="IPR000965">
    <property type="entry name" value="GPR_dom"/>
</dbReference>
<dbReference type="NCBIfam" id="NF001221">
    <property type="entry name" value="PRK00197.1"/>
    <property type="match status" value="1"/>
</dbReference>
<dbReference type="NCBIfam" id="TIGR00407">
    <property type="entry name" value="proA"/>
    <property type="match status" value="1"/>
</dbReference>
<dbReference type="PANTHER" id="PTHR11063:SF8">
    <property type="entry name" value="DELTA-1-PYRROLINE-5-CARBOXYLATE SYNTHASE"/>
    <property type="match status" value="1"/>
</dbReference>
<dbReference type="PANTHER" id="PTHR11063">
    <property type="entry name" value="GLUTAMATE SEMIALDEHYDE DEHYDROGENASE"/>
    <property type="match status" value="1"/>
</dbReference>
<dbReference type="Pfam" id="PF00171">
    <property type="entry name" value="Aldedh"/>
    <property type="match status" value="1"/>
</dbReference>
<dbReference type="PIRSF" id="PIRSF000151">
    <property type="entry name" value="GPR"/>
    <property type="match status" value="1"/>
</dbReference>
<dbReference type="SUPFAM" id="SSF53720">
    <property type="entry name" value="ALDH-like"/>
    <property type="match status" value="1"/>
</dbReference>
<dbReference type="PROSITE" id="PS01223">
    <property type="entry name" value="PROA"/>
    <property type="match status" value="1"/>
</dbReference>
<comment type="function">
    <text evidence="1">Catalyzes the NADPH-dependent reduction of L-glutamate 5-phosphate into L-glutamate 5-semialdehyde and phosphate. The product spontaneously undergoes cyclization to form 1-pyrroline-5-carboxylate.</text>
</comment>
<comment type="catalytic activity">
    <reaction evidence="1">
        <text>L-glutamate 5-semialdehyde + phosphate + NADP(+) = L-glutamyl 5-phosphate + NADPH + H(+)</text>
        <dbReference type="Rhea" id="RHEA:19541"/>
        <dbReference type="ChEBI" id="CHEBI:15378"/>
        <dbReference type="ChEBI" id="CHEBI:43474"/>
        <dbReference type="ChEBI" id="CHEBI:57783"/>
        <dbReference type="ChEBI" id="CHEBI:58066"/>
        <dbReference type="ChEBI" id="CHEBI:58274"/>
        <dbReference type="ChEBI" id="CHEBI:58349"/>
        <dbReference type="EC" id="1.2.1.41"/>
    </reaction>
</comment>
<comment type="pathway">
    <text evidence="1">Amino-acid biosynthesis; L-proline biosynthesis; L-glutamate 5-semialdehyde from L-glutamate: step 2/2.</text>
</comment>
<comment type="subcellular location">
    <subcellularLocation>
        <location evidence="1">Cytoplasm</location>
    </subcellularLocation>
</comment>
<comment type="similarity">
    <text evidence="1">Belongs to the gamma-glutamyl phosphate reductase family.</text>
</comment>
<proteinExistence type="inferred from homology"/>
<organism>
    <name type="scientific">Alkalilimnicola ehrlichii (strain ATCC BAA-1101 / DSM 17681 / MLHE-1)</name>
    <dbReference type="NCBI Taxonomy" id="187272"/>
    <lineage>
        <taxon>Bacteria</taxon>
        <taxon>Pseudomonadati</taxon>
        <taxon>Pseudomonadota</taxon>
        <taxon>Gammaproteobacteria</taxon>
        <taxon>Chromatiales</taxon>
        <taxon>Ectothiorhodospiraceae</taxon>
        <taxon>Alkalilimnicola</taxon>
    </lineage>
</organism>
<gene>
    <name evidence="1" type="primary">proA</name>
    <name type="ordered locus">Mlg_0403</name>
</gene>
<reference key="1">
    <citation type="submission" date="2006-08" db="EMBL/GenBank/DDBJ databases">
        <title>Complete sequence of Alkalilimnicola ehrilichei MLHE-1.</title>
        <authorList>
            <person name="Copeland A."/>
            <person name="Lucas S."/>
            <person name="Lapidus A."/>
            <person name="Barry K."/>
            <person name="Detter J.C."/>
            <person name="Glavina del Rio T."/>
            <person name="Hammon N."/>
            <person name="Israni S."/>
            <person name="Dalin E."/>
            <person name="Tice H."/>
            <person name="Pitluck S."/>
            <person name="Sims D."/>
            <person name="Brettin T."/>
            <person name="Bruce D."/>
            <person name="Han C."/>
            <person name="Tapia R."/>
            <person name="Gilna P."/>
            <person name="Schmutz J."/>
            <person name="Larimer F."/>
            <person name="Land M."/>
            <person name="Hauser L."/>
            <person name="Kyrpides N."/>
            <person name="Mikhailova N."/>
            <person name="Oremland R.S."/>
            <person name="Hoeft S.E."/>
            <person name="Switzer-Blum J."/>
            <person name="Kulp T."/>
            <person name="King G."/>
            <person name="Tabita R."/>
            <person name="Witte B."/>
            <person name="Santini J.M."/>
            <person name="Basu P."/>
            <person name="Hollibaugh J.T."/>
            <person name="Xie G."/>
            <person name="Stolz J.F."/>
            <person name="Richardson P."/>
        </authorList>
    </citation>
    <scope>NUCLEOTIDE SEQUENCE [LARGE SCALE GENOMIC DNA]</scope>
    <source>
        <strain>ATCC BAA-1101 / DSM 17681 / MLHE-1</strain>
    </source>
</reference>
<protein>
    <recommendedName>
        <fullName evidence="1">Gamma-glutamyl phosphate reductase</fullName>
        <shortName evidence="1">GPR</shortName>
        <ecNumber evidence="1">1.2.1.41</ecNumber>
    </recommendedName>
    <alternativeName>
        <fullName evidence="1">Glutamate-5-semialdehyde dehydrogenase</fullName>
    </alternativeName>
    <alternativeName>
        <fullName evidence="1">Glutamyl-gamma-semialdehyde dehydrogenase</fullName>
        <shortName evidence="1">GSA dehydrogenase</shortName>
    </alternativeName>
</protein>
<evidence type="ECO:0000255" key="1">
    <source>
        <dbReference type="HAMAP-Rule" id="MF_00412"/>
    </source>
</evidence>
<name>PROA_ALKEH</name>
<accession>Q0ABN0</accession>